<accession>P0ABU8</accession>
<accession>P18783</accession>
<comment type="function">
    <text evidence="1">Involved in the TonB-dependent energy-dependent transport of various receptor-bound substrates. Protects ExbD from proteolytic degradation and functionally stabilizes TonB (By similarity).</text>
</comment>
<comment type="subunit">
    <text evidence="1">The accessory proteins ExbB and ExbD seem to form a complex with TonB.</text>
</comment>
<comment type="subcellular location">
    <subcellularLocation>
        <location evidence="1">Cell inner membrane</location>
        <topology evidence="1">Multi-pass membrane protein</topology>
    </subcellularLocation>
</comment>
<comment type="similarity">
    <text evidence="2">Belongs to the ExbB/TolQ family.</text>
</comment>
<gene>
    <name type="primary">exbB</name>
    <name type="ordered locus">Z4359</name>
    <name type="ordered locus">ECs3890</name>
</gene>
<sequence length="244" mass="26287">MGNNLMQTDLSVWGMYQHADIVVKCVMIGLILASVVTWAIFFSKSVEFFNQKRRLKREQQLLAEARSLNQANDIAADFGSKSLSLHLLNEAQNELELSEGSDDNEGIKERTSFRLERRVAAVGRQMGRGNGYLATIGAISPFVGLFGTVWGIMNSFIGIAQTQTTNLAVVAPGIAEALLATAIGLVAAIPAVVIYNVFARQIGGFKAMLGDVAAQVLLLQSRDLDLEASAAAHPVRVAQKLRAG</sequence>
<reference key="1">
    <citation type="journal article" date="2001" name="Nature">
        <title>Genome sequence of enterohaemorrhagic Escherichia coli O157:H7.</title>
        <authorList>
            <person name="Perna N.T."/>
            <person name="Plunkett G. III"/>
            <person name="Burland V."/>
            <person name="Mau B."/>
            <person name="Glasner J.D."/>
            <person name="Rose D.J."/>
            <person name="Mayhew G.F."/>
            <person name="Evans P.S."/>
            <person name="Gregor J."/>
            <person name="Kirkpatrick H.A."/>
            <person name="Posfai G."/>
            <person name="Hackett J."/>
            <person name="Klink S."/>
            <person name="Boutin A."/>
            <person name="Shao Y."/>
            <person name="Miller L."/>
            <person name="Grotbeck E.J."/>
            <person name="Davis N.W."/>
            <person name="Lim A."/>
            <person name="Dimalanta E.T."/>
            <person name="Potamousis K."/>
            <person name="Apodaca J."/>
            <person name="Anantharaman T.S."/>
            <person name="Lin J."/>
            <person name="Yen G."/>
            <person name="Schwartz D.C."/>
            <person name="Welch R.A."/>
            <person name="Blattner F.R."/>
        </authorList>
    </citation>
    <scope>NUCLEOTIDE SEQUENCE [LARGE SCALE GENOMIC DNA]</scope>
    <source>
        <strain>O157:H7 / EDL933 / ATCC 700927 / EHEC</strain>
    </source>
</reference>
<reference key="2">
    <citation type="journal article" date="2001" name="DNA Res.">
        <title>Complete genome sequence of enterohemorrhagic Escherichia coli O157:H7 and genomic comparison with a laboratory strain K-12.</title>
        <authorList>
            <person name="Hayashi T."/>
            <person name="Makino K."/>
            <person name="Ohnishi M."/>
            <person name="Kurokawa K."/>
            <person name="Ishii K."/>
            <person name="Yokoyama K."/>
            <person name="Han C.-G."/>
            <person name="Ohtsubo E."/>
            <person name="Nakayama K."/>
            <person name="Murata T."/>
            <person name="Tanaka M."/>
            <person name="Tobe T."/>
            <person name="Iida T."/>
            <person name="Takami H."/>
            <person name="Honda T."/>
            <person name="Sasakawa C."/>
            <person name="Ogasawara N."/>
            <person name="Yasunaga T."/>
            <person name="Kuhara S."/>
            <person name="Shiba T."/>
            <person name="Hattori M."/>
            <person name="Shinagawa H."/>
        </authorList>
    </citation>
    <scope>NUCLEOTIDE SEQUENCE [LARGE SCALE GENOMIC DNA]</scope>
    <source>
        <strain>O157:H7 / Sakai / RIMD 0509952 / EHEC</strain>
    </source>
</reference>
<protein>
    <recommendedName>
        <fullName>Biopolymer transport protein ExbB</fullName>
    </recommendedName>
</protein>
<proteinExistence type="inferred from homology"/>
<keyword id="KW-0080">Bacteriocin transport</keyword>
<keyword id="KW-0997">Cell inner membrane</keyword>
<keyword id="KW-1003">Cell membrane</keyword>
<keyword id="KW-0472">Membrane</keyword>
<keyword id="KW-0653">Protein transport</keyword>
<keyword id="KW-1185">Reference proteome</keyword>
<keyword id="KW-0812">Transmembrane</keyword>
<keyword id="KW-1133">Transmembrane helix</keyword>
<keyword id="KW-0813">Transport</keyword>
<evidence type="ECO:0000250" key="1"/>
<evidence type="ECO:0000305" key="2"/>
<dbReference type="EMBL" id="AE005174">
    <property type="protein sequence ID" value="AAG58142.1"/>
    <property type="molecule type" value="Genomic_DNA"/>
</dbReference>
<dbReference type="EMBL" id="BA000007">
    <property type="protein sequence ID" value="BAB37313.1"/>
    <property type="molecule type" value="Genomic_DNA"/>
</dbReference>
<dbReference type="PIR" id="B85960">
    <property type="entry name" value="B85960"/>
</dbReference>
<dbReference type="PIR" id="B91115">
    <property type="entry name" value="B91115"/>
</dbReference>
<dbReference type="RefSeq" id="NP_311917.1">
    <property type="nucleotide sequence ID" value="NC_002695.1"/>
</dbReference>
<dbReference type="RefSeq" id="WP_000527844.1">
    <property type="nucleotide sequence ID" value="NZ_VOAI01000009.1"/>
</dbReference>
<dbReference type="SMR" id="P0ABU8"/>
<dbReference type="STRING" id="155864.Z4359"/>
<dbReference type="GeneID" id="916284"/>
<dbReference type="GeneID" id="93778981"/>
<dbReference type="KEGG" id="ece:Z4359"/>
<dbReference type="KEGG" id="ecs:ECs_3890"/>
<dbReference type="PATRIC" id="fig|386585.9.peg.4058"/>
<dbReference type="eggNOG" id="COG0811">
    <property type="taxonomic scope" value="Bacteria"/>
</dbReference>
<dbReference type="HOGENOM" id="CLU_053325_0_2_6"/>
<dbReference type="OMA" id="PHMVKVG"/>
<dbReference type="Proteomes" id="UP000000558">
    <property type="component" value="Chromosome"/>
</dbReference>
<dbReference type="Proteomes" id="UP000002519">
    <property type="component" value="Chromosome"/>
</dbReference>
<dbReference type="GO" id="GO:0005886">
    <property type="term" value="C:plasma membrane"/>
    <property type="evidence" value="ECO:0007669"/>
    <property type="project" value="UniProtKB-SubCell"/>
</dbReference>
<dbReference type="GO" id="GO:0022857">
    <property type="term" value="F:transmembrane transporter activity"/>
    <property type="evidence" value="ECO:0007669"/>
    <property type="project" value="InterPro"/>
</dbReference>
<dbReference type="GO" id="GO:0043213">
    <property type="term" value="P:bacteriocin transport"/>
    <property type="evidence" value="ECO:0007669"/>
    <property type="project" value="UniProtKB-KW"/>
</dbReference>
<dbReference type="GO" id="GO:0017038">
    <property type="term" value="P:protein import"/>
    <property type="evidence" value="ECO:0007669"/>
    <property type="project" value="TreeGrafter"/>
</dbReference>
<dbReference type="InterPro" id="IPR050790">
    <property type="entry name" value="ExbB/TolQ_transport"/>
</dbReference>
<dbReference type="InterPro" id="IPR002898">
    <property type="entry name" value="MotA_ExbB_proton_chnl"/>
</dbReference>
<dbReference type="InterPro" id="IPR014164">
    <property type="entry name" value="TonB_ExbB_1"/>
</dbReference>
<dbReference type="NCBIfam" id="TIGR02797">
    <property type="entry name" value="exbB"/>
    <property type="match status" value="1"/>
</dbReference>
<dbReference type="NCBIfam" id="NF007722">
    <property type="entry name" value="PRK10414.1"/>
    <property type="match status" value="1"/>
</dbReference>
<dbReference type="PANTHER" id="PTHR30625:SF16">
    <property type="entry name" value="BIOPOLYMER TRANSPORT PROTEIN EXBB"/>
    <property type="match status" value="1"/>
</dbReference>
<dbReference type="PANTHER" id="PTHR30625">
    <property type="entry name" value="PROTEIN TOLQ"/>
    <property type="match status" value="1"/>
</dbReference>
<dbReference type="Pfam" id="PF01618">
    <property type="entry name" value="MotA_ExbB"/>
    <property type="match status" value="1"/>
</dbReference>
<organism>
    <name type="scientific">Escherichia coli O157:H7</name>
    <dbReference type="NCBI Taxonomy" id="83334"/>
    <lineage>
        <taxon>Bacteria</taxon>
        <taxon>Pseudomonadati</taxon>
        <taxon>Pseudomonadota</taxon>
        <taxon>Gammaproteobacteria</taxon>
        <taxon>Enterobacterales</taxon>
        <taxon>Enterobacteriaceae</taxon>
        <taxon>Escherichia</taxon>
    </lineage>
</organism>
<name>EXBB_ECO57</name>
<feature type="chain" id="PRO_0000145800" description="Biopolymer transport protein ExbB">
    <location>
        <begin position="1"/>
        <end position="244"/>
    </location>
</feature>
<feature type="topological domain" description="Periplasmic" evidence="2">
    <location>
        <begin position="1"/>
        <end position="15"/>
    </location>
</feature>
<feature type="transmembrane region" description="Helical" evidence="2">
    <location>
        <begin position="16"/>
        <end position="39"/>
    </location>
</feature>
<feature type="topological domain" description="Cytoplasmic" evidence="2">
    <location>
        <begin position="40"/>
        <end position="127"/>
    </location>
</feature>
<feature type="transmembrane region" description="Helical" evidence="2">
    <location>
        <begin position="128"/>
        <end position="155"/>
    </location>
</feature>
<feature type="topological domain" description="Periplasmic" evidence="2">
    <location>
        <begin position="156"/>
        <end position="161"/>
    </location>
</feature>
<feature type="transmembrane region" description="Helical" evidence="2">
    <location>
        <begin position="162"/>
        <end position="194"/>
    </location>
</feature>
<feature type="topological domain" description="Cytoplasmic" evidence="2">
    <location>
        <begin position="195"/>
        <end position="244"/>
    </location>
</feature>